<name>OTC_VIBS2</name>
<accession>P96172</accession>
<feature type="chain" id="PRO_0000113055" description="Ornithine carbamoyltransferase">
    <location>
        <begin position="1"/>
        <end position="301"/>
    </location>
</feature>
<feature type="binding site" evidence="2">
    <location>
        <position position="100"/>
    </location>
    <ligand>
        <name>carbamoyl phosphate</name>
        <dbReference type="ChEBI" id="CHEBI:58228"/>
    </ligand>
</feature>
<feature type="binding site" evidence="2">
    <location>
        <begin position="127"/>
        <end position="130"/>
    </location>
    <ligand>
        <name>carbamoyl phosphate</name>
        <dbReference type="ChEBI" id="CHEBI:58228"/>
    </ligand>
</feature>
<feature type="binding site" evidence="2">
    <location>
        <position position="158"/>
    </location>
    <ligand>
        <name>L-ornithine</name>
        <dbReference type="ChEBI" id="CHEBI:46911"/>
    </ligand>
</feature>
<feature type="binding site" evidence="2">
    <location>
        <position position="221"/>
    </location>
    <ligand>
        <name>L-ornithine</name>
        <dbReference type="ChEBI" id="CHEBI:46911"/>
    </ligand>
</feature>
<feature type="binding site" evidence="2">
    <location>
        <begin position="225"/>
        <end position="226"/>
    </location>
    <ligand>
        <name>L-ornithine</name>
        <dbReference type="ChEBI" id="CHEBI:46911"/>
    </ligand>
</feature>
<feature type="binding site" evidence="3">
    <location>
        <position position="260"/>
    </location>
    <ligand>
        <name>carbamoyl phosphate</name>
        <dbReference type="ChEBI" id="CHEBI:58228"/>
    </ligand>
</feature>
<feature type="binding site" evidence="2">
    <location>
        <position position="288"/>
    </location>
    <ligand>
        <name>carbamoyl phosphate</name>
        <dbReference type="ChEBI" id="CHEBI:58228"/>
    </ligand>
</feature>
<comment type="function">
    <text evidence="1">Reversibly catalyzes the transfer of the carbamoyl group from carbamoyl phosphate (CP) to the N(epsilon) atom of ornithine (ORN) to produce L-citrulline.</text>
</comment>
<comment type="catalytic activity">
    <reaction>
        <text>carbamoyl phosphate + L-ornithine = L-citrulline + phosphate + H(+)</text>
        <dbReference type="Rhea" id="RHEA:19513"/>
        <dbReference type="ChEBI" id="CHEBI:15378"/>
        <dbReference type="ChEBI" id="CHEBI:43474"/>
        <dbReference type="ChEBI" id="CHEBI:46911"/>
        <dbReference type="ChEBI" id="CHEBI:57743"/>
        <dbReference type="ChEBI" id="CHEBI:58228"/>
        <dbReference type="EC" id="2.1.3.3"/>
    </reaction>
</comment>
<comment type="pathway">
    <text>Amino-acid biosynthesis; L-arginine biosynthesis; L-arginine from L-ornithine and carbamoyl phosphate: step 1/3.</text>
</comment>
<comment type="subcellular location">
    <subcellularLocation>
        <location evidence="1">Cytoplasm</location>
    </subcellularLocation>
</comment>
<comment type="similarity">
    <text evidence="3">Belongs to the aspartate/ornithine carbamoyltransferase superfamily. OTCase family.</text>
</comment>
<comment type="caution">
    <text evidence="3">Lacks the conserved threonine and leucine residues in positions 50 and 261, respectively, which are part of the carbamoylphosphate and ornithine binding sites; they are replaced by a leucine and a glutamine residue, respectively.</text>
</comment>
<sequence>MENLLSVKDLSKQQILDLLALAKAVKANPAEYSQALAGKSIVTIYEKPSLRTRVTFDIGIHKLGGHAVYLDAQNGAIGERETVKDFAANISRWADAIVARVVSHKTLEGLVEHGSVPVVNSLCDLYHPCQALADFLTISEHYEDVSKVKLAYVGEGNNVTHSLMLTGAILGAEVTAVCPRGSSPDAQIVKQAMALAEISGGKINVTDNLDAIVDYDVIYGDTWVSMGDDTPLAQVKEKYMPYQINKALLMRTGIKHVLHCQPAHRELEITSEVMDGEHSLIFDQAENRMHAQNAVLLTLLK</sequence>
<reference key="1">
    <citation type="submission" date="1997-02" db="EMBL/GenBank/DDBJ databases">
        <authorList>
            <person name="Liang Z.Y."/>
            <person name="Demarez M."/>
            <person name="Legrain C."/>
            <person name="Baetens M."/>
            <person name="Roovers M."/>
            <person name="Glansdorff N."/>
        </authorList>
    </citation>
    <scope>NUCLEOTIDE SEQUENCE [GENOMIC DNA]</scope>
</reference>
<organism>
    <name type="scientific">Vibrio sp. (strain 2693)</name>
    <dbReference type="NCBI Taxonomy" id="79682"/>
    <lineage>
        <taxon>Bacteria</taxon>
        <taxon>Pseudomonadati</taxon>
        <taxon>Pseudomonadota</taxon>
        <taxon>Gammaproteobacteria</taxon>
        <taxon>Vibrionales</taxon>
        <taxon>Vibrionaceae</taxon>
        <taxon>Vibrio</taxon>
    </lineage>
</organism>
<protein>
    <recommendedName>
        <fullName>Ornithine carbamoyltransferase</fullName>
        <shortName>OTCase</shortName>
        <ecNumber>2.1.3.3</ecNumber>
    </recommendedName>
</protein>
<evidence type="ECO:0000250" key="1"/>
<evidence type="ECO:0000255" key="2">
    <source>
        <dbReference type="HAMAP-Rule" id="MF_01109"/>
    </source>
</evidence>
<evidence type="ECO:0000305" key="3"/>
<dbReference type="EC" id="2.1.3.3"/>
<dbReference type="EMBL" id="Y11033">
    <property type="protein sequence ID" value="CAA71921.1"/>
    <property type="molecule type" value="Genomic_DNA"/>
</dbReference>
<dbReference type="SMR" id="P96172"/>
<dbReference type="UniPathway" id="UPA00068">
    <property type="reaction ID" value="UER00112"/>
</dbReference>
<dbReference type="GO" id="GO:0005737">
    <property type="term" value="C:cytoplasm"/>
    <property type="evidence" value="ECO:0007669"/>
    <property type="project" value="UniProtKB-SubCell"/>
</dbReference>
<dbReference type="GO" id="GO:0016597">
    <property type="term" value="F:amino acid binding"/>
    <property type="evidence" value="ECO:0007669"/>
    <property type="project" value="InterPro"/>
</dbReference>
<dbReference type="GO" id="GO:0004585">
    <property type="term" value="F:ornithine carbamoyltransferase activity"/>
    <property type="evidence" value="ECO:0007669"/>
    <property type="project" value="UniProtKB-UniRule"/>
</dbReference>
<dbReference type="GO" id="GO:0042450">
    <property type="term" value="P:arginine biosynthetic process via ornithine"/>
    <property type="evidence" value="ECO:0007669"/>
    <property type="project" value="TreeGrafter"/>
</dbReference>
<dbReference type="GO" id="GO:0019240">
    <property type="term" value="P:citrulline biosynthetic process"/>
    <property type="evidence" value="ECO:0007669"/>
    <property type="project" value="TreeGrafter"/>
</dbReference>
<dbReference type="GO" id="GO:0006526">
    <property type="term" value="P:L-arginine biosynthetic process"/>
    <property type="evidence" value="ECO:0007669"/>
    <property type="project" value="UniProtKB-UniPathway"/>
</dbReference>
<dbReference type="FunFam" id="3.40.50.1370:FF:000008">
    <property type="entry name" value="Ornithine carbamoyltransferase"/>
    <property type="match status" value="1"/>
</dbReference>
<dbReference type="Gene3D" id="3.40.50.1370">
    <property type="entry name" value="Aspartate/ornithine carbamoyltransferase"/>
    <property type="match status" value="2"/>
</dbReference>
<dbReference type="HAMAP" id="MF_01109">
    <property type="entry name" value="OTCase"/>
    <property type="match status" value="1"/>
</dbReference>
<dbReference type="InterPro" id="IPR006132">
    <property type="entry name" value="Asp/Orn_carbamoyltranf_P-bd"/>
</dbReference>
<dbReference type="InterPro" id="IPR006130">
    <property type="entry name" value="Asp/Orn_carbamoylTrfase"/>
</dbReference>
<dbReference type="InterPro" id="IPR036901">
    <property type="entry name" value="Asp/Orn_carbamoylTrfase_sf"/>
</dbReference>
<dbReference type="InterPro" id="IPR006131">
    <property type="entry name" value="Asp_carbamoyltransf_Asp/Orn-bd"/>
</dbReference>
<dbReference type="InterPro" id="IPR002292">
    <property type="entry name" value="Orn/put_carbamltrans"/>
</dbReference>
<dbReference type="InterPro" id="IPR024904">
    <property type="entry name" value="OTCase_ArgI"/>
</dbReference>
<dbReference type="NCBIfam" id="TIGR00658">
    <property type="entry name" value="orni_carb_tr"/>
    <property type="match status" value="1"/>
</dbReference>
<dbReference type="NCBIfam" id="NF001986">
    <property type="entry name" value="PRK00779.1"/>
    <property type="match status" value="1"/>
</dbReference>
<dbReference type="NCBIfam" id="NF011380">
    <property type="entry name" value="PRK14805.1"/>
    <property type="match status" value="1"/>
</dbReference>
<dbReference type="PANTHER" id="PTHR45753">
    <property type="entry name" value="ORNITHINE CARBAMOYLTRANSFERASE, MITOCHONDRIAL"/>
    <property type="match status" value="1"/>
</dbReference>
<dbReference type="PANTHER" id="PTHR45753:SF3">
    <property type="entry name" value="ORNITHINE TRANSCARBAMYLASE, MITOCHONDRIAL"/>
    <property type="match status" value="1"/>
</dbReference>
<dbReference type="Pfam" id="PF00185">
    <property type="entry name" value="OTCace"/>
    <property type="match status" value="1"/>
</dbReference>
<dbReference type="Pfam" id="PF02729">
    <property type="entry name" value="OTCace_N"/>
    <property type="match status" value="1"/>
</dbReference>
<dbReference type="PRINTS" id="PR00100">
    <property type="entry name" value="AOTCASE"/>
</dbReference>
<dbReference type="PRINTS" id="PR00102">
    <property type="entry name" value="OTCASE"/>
</dbReference>
<dbReference type="SUPFAM" id="SSF53671">
    <property type="entry name" value="Aspartate/ornithine carbamoyltransferase"/>
    <property type="match status" value="1"/>
</dbReference>
<keyword id="KW-0028">Amino-acid biosynthesis</keyword>
<keyword id="KW-0055">Arginine biosynthesis</keyword>
<keyword id="KW-0963">Cytoplasm</keyword>
<keyword id="KW-0808">Transferase</keyword>
<proteinExistence type="inferred from homology"/>
<gene>
    <name type="primary">argF</name>
</gene>